<organism>
    <name type="scientific">Staphylococcus aureus (strain N315)</name>
    <dbReference type="NCBI Taxonomy" id="158879"/>
    <lineage>
        <taxon>Bacteria</taxon>
        <taxon>Bacillati</taxon>
        <taxon>Bacillota</taxon>
        <taxon>Bacilli</taxon>
        <taxon>Bacillales</taxon>
        <taxon>Staphylococcaceae</taxon>
        <taxon>Staphylococcus</taxon>
    </lineage>
</organism>
<name>RL27_STAAN</name>
<comment type="PTM">
    <text evidence="1">The N-terminus is cleaved by ribosomal processing cysteine protease Prp.</text>
</comment>
<comment type="similarity">
    <text evidence="2">Belongs to the bacterial ribosomal protein bL27 family.</text>
</comment>
<evidence type="ECO:0000250" key="1">
    <source>
        <dbReference type="UniProtKB" id="Q2FXT0"/>
    </source>
</evidence>
<evidence type="ECO:0000255" key="2">
    <source>
        <dbReference type="HAMAP-Rule" id="MF_00539"/>
    </source>
</evidence>
<evidence type="ECO:0000305" key="3"/>
<sequence length="94" mass="10315">MLKLNLQFFASKKGVSSTKNGRDSESKRLGAKRADGQFVTGGSILYRQRGTKIYPGENVGRGGDDTLFAKIDGVVKFERKGRDKKQVSVYAVAE</sequence>
<protein>
    <recommendedName>
        <fullName evidence="2">Large ribosomal subunit protein bL27</fullName>
    </recommendedName>
    <alternativeName>
        <fullName evidence="3">50S ribosomal protein L27</fullName>
    </alternativeName>
</protein>
<dbReference type="EMBL" id="BA000018">
    <property type="protein sequence ID" value="BAB42737.1"/>
    <property type="molecule type" value="Genomic_DNA"/>
</dbReference>
<dbReference type="PIR" id="D89947">
    <property type="entry name" value="D89947"/>
</dbReference>
<dbReference type="RefSeq" id="WP_000916187.1">
    <property type="nucleotide sequence ID" value="NC_002745.2"/>
</dbReference>
<dbReference type="SMR" id="P66133"/>
<dbReference type="EnsemblBacteria" id="BAB42737">
    <property type="protein sequence ID" value="BAB42737"/>
    <property type="gene ID" value="BAB42737"/>
</dbReference>
<dbReference type="GeneID" id="98346013"/>
<dbReference type="KEGG" id="sau:SA1471"/>
<dbReference type="HOGENOM" id="CLU_095424_4_0_9"/>
<dbReference type="GO" id="GO:0022625">
    <property type="term" value="C:cytosolic large ribosomal subunit"/>
    <property type="evidence" value="ECO:0007669"/>
    <property type="project" value="TreeGrafter"/>
</dbReference>
<dbReference type="GO" id="GO:0003735">
    <property type="term" value="F:structural constituent of ribosome"/>
    <property type="evidence" value="ECO:0007669"/>
    <property type="project" value="InterPro"/>
</dbReference>
<dbReference type="GO" id="GO:0006412">
    <property type="term" value="P:translation"/>
    <property type="evidence" value="ECO:0007669"/>
    <property type="project" value="UniProtKB-UniRule"/>
</dbReference>
<dbReference type="FunFam" id="2.40.50.100:FF:000004">
    <property type="entry name" value="50S ribosomal protein L27"/>
    <property type="match status" value="1"/>
</dbReference>
<dbReference type="Gene3D" id="2.40.50.100">
    <property type="match status" value="1"/>
</dbReference>
<dbReference type="HAMAP" id="MF_00539">
    <property type="entry name" value="Ribosomal_bL27"/>
    <property type="match status" value="1"/>
</dbReference>
<dbReference type="InterPro" id="IPR001684">
    <property type="entry name" value="Ribosomal_bL27"/>
</dbReference>
<dbReference type="InterPro" id="IPR018261">
    <property type="entry name" value="Ribosomal_bL27_CS"/>
</dbReference>
<dbReference type="NCBIfam" id="TIGR00062">
    <property type="entry name" value="L27"/>
    <property type="match status" value="1"/>
</dbReference>
<dbReference type="PANTHER" id="PTHR15893:SF0">
    <property type="entry name" value="LARGE RIBOSOMAL SUBUNIT PROTEIN BL27M"/>
    <property type="match status" value="1"/>
</dbReference>
<dbReference type="PANTHER" id="PTHR15893">
    <property type="entry name" value="RIBOSOMAL PROTEIN L27"/>
    <property type="match status" value="1"/>
</dbReference>
<dbReference type="Pfam" id="PF01016">
    <property type="entry name" value="Ribosomal_L27"/>
    <property type="match status" value="1"/>
</dbReference>
<dbReference type="PRINTS" id="PR00063">
    <property type="entry name" value="RIBOSOMALL27"/>
</dbReference>
<dbReference type="SUPFAM" id="SSF110324">
    <property type="entry name" value="Ribosomal L27 protein-like"/>
    <property type="match status" value="1"/>
</dbReference>
<dbReference type="PROSITE" id="PS00831">
    <property type="entry name" value="RIBOSOMAL_L27"/>
    <property type="match status" value="1"/>
</dbReference>
<feature type="propeptide" id="PRO_0000459936" evidence="1">
    <location>
        <begin position="1"/>
        <end position="9"/>
    </location>
</feature>
<feature type="chain" id="PRO_0000181166" description="Large ribosomal subunit protein bL27">
    <location>
        <begin position="10"/>
        <end position="94"/>
    </location>
</feature>
<proteinExistence type="evidence at protein level"/>
<reference key="1">
    <citation type="journal article" date="2001" name="Lancet">
        <title>Whole genome sequencing of meticillin-resistant Staphylococcus aureus.</title>
        <authorList>
            <person name="Kuroda M."/>
            <person name="Ohta T."/>
            <person name="Uchiyama I."/>
            <person name="Baba T."/>
            <person name="Yuzawa H."/>
            <person name="Kobayashi I."/>
            <person name="Cui L."/>
            <person name="Oguchi A."/>
            <person name="Aoki K."/>
            <person name="Nagai Y."/>
            <person name="Lian J.-Q."/>
            <person name="Ito T."/>
            <person name="Kanamori M."/>
            <person name="Matsumaru H."/>
            <person name="Maruyama A."/>
            <person name="Murakami H."/>
            <person name="Hosoyama A."/>
            <person name="Mizutani-Ui Y."/>
            <person name="Takahashi N.K."/>
            <person name="Sawano T."/>
            <person name="Inoue R."/>
            <person name="Kaito C."/>
            <person name="Sekimizu K."/>
            <person name="Hirakawa H."/>
            <person name="Kuhara S."/>
            <person name="Goto S."/>
            <person name="Yabuzaki J."/>
            <person name="Kanehisa M."/>
            <person name="Yamashita A."/>
            <person name="Oshima K."/>
            <person name="Furuya K."/>
            <person name="Yoshino C."/>
            <person name="Shiba T."/>
            <person name="Hattori M."/>
            <person name="Ogasawara N."/>
            <person name="Hayashi H."/>
            <person name="Hiramatsu K."/>
        </authorList>
    </citation>
    <scope>NUCLEOTIDE SEQUENCE [LARGE SCALE GENOMIC DNA]</scope>
    <source>
        <strain>N315</strain>
    </source>
</reference>
<reference key="2">
    <citation type="submission" date="2007-10" db="UniProtKB">
        <title>Shotgun proteomic analysis of total and membrane protein extracts of S. aureus strain N315.</title>
        <authorList>
            <person name="Vaezzadeh A.R."/>
            <person name="Deshusses J."/>
            <person name="Lescuyer P."/>
            <person name="Hochstrasser D.F."/>
        </authorList>
    </citation>
    <scope>IDENTIFICATION BY MASS SPECTROMETRY [LARGE SCALE ANALYSIS]</scope>
    <source>
        <strain>N315</strain>
    </source>
</reference>
<gene>
    <name evidence="2" type="primary">rpmA</name>
    <name type="ordered locus">SA1471</name>
</gene>
<keyword id="KW-0687">Ribonucleoprotein</keyword>
<keyword id="KW-0689">Ribosomal protein</keyword>
<accession>P66133</accession>
<accession>Q99TK8</accession>